<gene>
    <name type="primary">rpmA</name>
    <name type="ordered locus">TP_0743</name>
</gene>
<proteinExistence type="inferred from homology"/>
<name>RL27_TREPA</name>
<comment type="similarity">
    <text evidence="2">Belongs to the bacterial ribosomal protein bL27 family.</text>
</comment>
<keyword id="KW-1185">Reference proteome</keyword>
<keyword id="KW-0687">Ribonucleoprotein</keyword>
<keyword id="KW-0689">Ribosomal protein</keyword>
<feature type="chain" id="PRO_0000181197" description="Large ribosomal subunit protein bL27">
    <location>
        <begin position="1"/>
        <end position="87"/>
    </location>
</feature>
<feature type="region of interest" description="Disordered" evidence="1">
    <location>
        <begin position="1"/>
        <end position="20"/>
    </location>
</feature>
<protein>
    <recommendedName>
        <fullName evidence="2">Large ribosomal subunit protein bL27</fullName>
    </recommendedName>
    <alternativeName>
        <fullName>50S ribosomal protein L27</fullName>
    </alternativeName>
</protein>
<sequence>MARKRGGSGSKNGRDSNPKYLGVKLFGGQHARAGSILVRQRGTRIHPGENVGRGKDDTLFALAPGVVTYLQRKGRRLVSVCVENRPS</sequence>
<dbReference type="EMBL" id="AE000520">
    <property type="protein sequence ID" value="AAC65717.1"/>
    <property type="molecule type" value="Genomic_DNA"/>
</dbReference>
<dbReference type="PIR" id="D71286">
    <property type="entry name" value="D71286"/>
</dbReference>
<dbReference type="RefSeq" id="WP_010882188.1">
    <property type="nucleotide sequence ID" value="NC_021490.2"/>
</dbReference>
<dbReference type="SMR" id="O83725"/>
<dbReference type="IntAct" id="O83725">
    <property type="interactions" value="3"/>
</dbReference>
<dbReference type="STRING" id="243276.TP_0743"/>
<dbReference type="EnsemblBacteria" id="AAC65717">
    <property type="protein sequence ID" value="AAC65717"/>
    <property type="gene ID" value="TP_0743"/>
</dbReference>
<dbReference type="GeneID" id="93876511"/>
<dbReference type="KEGG" id="tpa:TP_0743"/>
<dbReference type="KEGG" id="tpw:TPANIC_0743"/>
<dbReference type="eggNOG" id="COG0211">
    <property type="taxonomic scope" value="Bacteria"/>
</dbReference>
<dbReference type="HOGENOM" id="CLU_095424_4_0_12"/>
<dbReference type="OrthoDB" id="9803474at2"/>
<dbReference type="Proteomes" id="UP000000811">
    <property type="component" value="Chromosome"/>
</dbReference>
<dbReference type="GO" id="GO:0022625">
    <property type="term" value="C:cytosolic large ribosomal subunit"/>
    <property type="evidence" value="ECO:0007669"/>
    <property type="project" value="TreeGrafter"/>
</dbReference>
<dbReference type="GO" id="GO:0003735">
    <property type="term" value="F:structural constituent of ribosome"/>
    <property type="evidence" value="ECO:0007669"/>
    <property type="project" value="InterPro"/>
</dbReference>
<dbReference type="GO" id="GO:0006412">
    <property type="term" value="P:translation"/>
    <property type="evidence" value="ECO:0007669"/>
    <property type="project" value="UniProtKB-UniRule"/>
</dbReference>
<dbReference type="FunFam" id="2.40.50.100:FF:000020">
    <property type="entry name" value="50S ribosomal protein L27"/>
    <property type="match status" value="1"/>
</dbReference>
<dbReference type="Gene3D" id="2.40.50.100">
    <property type="match status" value="1"/>
</dbReference>
<dbReference type="HAMAP" id="MF_00539">
    <property type="entry name" value="Ribosomal_bL27"/>
    <property type="match status" value="1"/>
</dbReference>
<dbReference type="InterPro" id="IPR001684">
    <property type="entry name" value="Ribosomal_bL27"/>
</dbReference>
<dbReference type="InterPro" id="IPR018261">
    <property type="entry name" value="Ribosomal_bL27_CS"/>
</dbReference>
<dbReference type="NCBIfam" id="TIGR00062">
    <property type="entry name" value="L27"/>
    <property type="match status" value="1"/>
</dbReference>
<dbReference type="PANTHER" id="PTHR15893:SF0">
    <property type="entry name" value="LARGE RIBOSOMAL SUBUNIT PROTEIN BL27M"/>
    <property type="match status" value="1"/>
</dbReference>
<dbReference type="PANTHER" id="PTHR15893">
    <property type="entry name" value="RIBOSOMAL PROTEIN L27"/>
    <property type="match status" value="1"/>
</dbReference>
<dbReference type="Pfam" id="PF01016">
    <property type="entry name" value="Ribosomal_L27"/>
    <property type="match status" value="1"/>
</dbReference>
<dbReference type="PRINTS" id="PR00063">
    <property type="entry name" value="RIBOSOMALL27"/>
</dbReference>
<dbReference type="SUPFAM" id="SSF110324">
    <property type="entry name" value="Ribosomal L27 protein-like"/>
    <property type="match status" value="1"/>
</dbReference>
<dbReference type="PROSITE" id="PS00831">
    <property type="entry name" value="RIBOSOMAL_L27"/>
    <property type="match status" value="1"/>
</dbReference>
<organism>
    <name type="scientific">Treponema pallidum (strain Nichols)</name>
    <dbReference type="NCBI Taxonomy" id="243276"/>
    <lineage>
        <taxon>Bacteria</taxon>
        <taxon>Pseudomonadati</taxon>
        <taxon>Spirochaetota</taxon>
        <taxon>Spirochaetia</taxon>
        <taxon>Spirochaetales</taxon>
        <taxon>Treponemataceae</taxon>
        <taxon>Treponema</taxon>
    </lineage>
</organism>
<accession>O83725</accession>
<reference key="1">
    <citation type="journal article" date="1998" name="Science">
        <title>Complete genome sequence of Treponema pallidum, the syphilis spirochete.</title>
        <authorList>
            <person name="Fraser C.M."/>
            <person name="Norris S.J."/>
            <person name="Weinstock G.M."/>
            <person name="White O."/>
            <person name="Sutton G.G."/>
            <person name="Dodson R.J."/>
            <person name="Gwinn M.L."/>
            <person name="Hickey E.K."/>
            <person name="Clayton R.A."/>
            <person name="Ketchum K.A."/>
            <person name="Sodergren E."/>
            <person name="Hardham J.M."/>
            <person name="McLeod M.P."/>
            <person name="Salzberg S.L."/>
            <person name="Peterson J.D."/>
            <person name="Khalak H.G."/>
            <person name="Richardson D.L."/>
            <person name="Howell J.K."/>
            <person name="Chidambaram M."/>
            <person name="Utterback T.R."/>
            <person name="McDonald L.A."/>
            <person name="Artiach P."/>
            <person name="Bowman C."/>
            <person name="Cotton M.D."/>
            <person name="Fujii C."/>
            <person name="Garland S.A."/>
            <person name="Hatch B."/>
            <person name="Horst K."/>
            <person name="Roberts K.M."/>
            <person name="Sandusky M."/>
            <person name="Weidman J.F."/>
            <person name="Smith H.O."/>
            <person name="Venter J.C."/>
        </authorList>
    </citation>
    <scope>NUCLEOTIDE SEQUENCE [LARGE SCALE GENOMIC DNA]</scope>
    <source>
        <strain>Nichols</strain>
    </source>
</reference>
<evidence type="ECO:0000256" key="1">
    <source>
        <dbReference type="SAM" id="MobiDB-lite"/>
    </source>
</evidence>
<evidence type="ECO:0000305" key="2"/>